<gene>
    <name evidence="1" type="primary">ispH</name>
    <name type="synonym">lytB</name>
    <name type="ordered locus">BCE33L4038</name>
</gene>
<feature type="chain" id="PRO_0000128770" description="4-hydroxy-3-methylbut-2-enyl diphosphate reductase">
    <location>
        <begin position="1"/>
        <end position="316"/>
    </location>
</feature>
<feature type="active site" description="Proton donor" evidence="1">
    <location>
        <position position="133"/>
    </location>
</feature>
<feature type="binding site" evidence="1">
    <location>
        <position position="12"/>
    </location>
    <ligand>
        <name>[4Fe-4S] cluster</name>
        <dbReference type="ChEBI" id="CHEBI:49883"/>
    </ligand>
</feature>
<feature type="binding site" evidence="1">
    <location>
        <position position="43"/>
    </location>
    <ligand>
        <name>(2E)-4-hydroxy-3-methylbut-2-enyl diphosphate</name>
        <dbReference type="ChEBI" id="CHEBI:128753"/>
    </ligand>
</feature>
<feature type="binding site" evidence="1">
    <location>
        <position position="43"/>
    </location>
    <ligand>
        <name>dimethylallyl diphosphate</name>
        <dbReference type="ChEBI" id="CHEBI:57623"/>
    </ligand>
</feature>
<feature type="binding site" evidence="1">
    <location>
        <position position="43"/>
    </location>
    <ligand>
        <name>isopentenyl diphosphate</name>
        <dbReference type="ChEBI" id="CHEBI:128769"/>
    </ligand>
</feature>
<feature type="binding site" evidence="1">
    <location>
        <position position="81"/>
    </location>
    <ligand>
        <name>(2E)-4-hydroxy-3-methylbut-2-enyl diphosphate</name>
        <dbReference type="ChEBI" id="CHEBI:128753"/>
    </ligand>
</feature>
<feature type="binding site" evidence="1">
    <location>
        <position position="81"/>
    </location>
    <ligand>
        <name>dimethylallyl diphosphate</name>
        <dbReference type="ChEBI" id="CHEBI:57623"/>
    </ligand>
</feature>
<feature type="binding site" evidence="1">
    <location>
        <position position="81"/>
    </location>
    <ligand>
        <name>isopentenyl diphosphate</name>
        <dbReference type="ChEBI" id="CHEBI:128769"/>
    </ligand>
</feature>
<feature type="binding site" evidence="1">
    <location>
        <position position="103"/>
    </location>
    <ligand>
        <name>[4Fe-4S] cluster</name>
        <dbReference type="ChEBI" id="CHEBI:49883"/>
    </ligand>
</feature>
<feature type="binding site" evidence="1">
    <location>
        <position position="131"/>
    </location>
    <ligand>
        <name>(2E)-4-hydroxy-3-methylbut-2-enyl diphosphate</name>
        <dbReference type="ChEBI" id="CHEBI:128753"/>
    </ligand>
</feature>
<feature type="binding site" evidence="1">
    <location>
        <position position="131"/>
    </location>
    <ligand>
        <name>dimethylallyl diphosphate</name>
        <dbReference type="ChEBI" id="CHEBI:57623"/>
    </ligand>
</feature>
<feature type="binding site" evidence="1">
    <location>
        <position position="131"/>
    </location>
    <ligand>
        <name>isopentenyl diphosphate</name>
        <dbReference type="ChEBI" id="CHEBI:128769"/>
    </ligand>
</feature>
<feature type="binding site" evidence="1">
    <location>
        <position position="170"/>
    </location>
    <ligand>
        <name>(2E)-4-hydroxy-3-methylbut-2-enyl diphosphate</name>
        <dbReference type="ChEBI" id="CHEBI:128753"/>
    </ligand>
</feature>
<feature type="binding site" evidence="1">
    <location>
        <position position="198"/>
    </location>
    <ligand>
        <name>[4Fe-4S] cluster</name>
        <dbReference type="ChEBI" id="CHEBI:49883"/>
    </ligand>
</feature>
<feature type="binding site" evidence="1">
    <location>
        <position position="226"/>
    </location>
    <ligand>
        <name>(2E)-4-hydroxy-3-methylbut-2-enyl diphosphate</name>
        <dbReference type="ChEBI" id="CHEBI:128753"/>
    </ligand>
</feature>
<feature type="binding site" evidence="1">
    <location>
        <position position="226"/>
    </location>
    <ligand>
        <name>dimethylallyl diphosphate</name>
        <dbReference type="ChEBI" id="CHEBI:57623"/>
    </ligand>
</feature>
<feature type="binding site" evidence="1">
    <location>
        <position position="226"/>
    </location>
    <ligand>
        <name>isopentenyl diphosphate</name>
        <dbReference type="ChEBI" id="CHEBI:128769"/>
    </ligand>
</feature>
<feature type="binding site" evidence="1">
    <location>
        <position position="228"/>
    </location>
    <ligand>
        <name>(2E)-4-hydroxy-3-methylbut-2-enyl diphosphate</name>
        <dbReference type="ChEBI" id="CHEBI:128753"/>
    </ligand>
</feature>
<feature type="binding site" evidence="1">
    <location>
        <position position="228"/>
    </location>
    <ligand>
        <name>dimethylallyl diphosphate</name>
        <dbReference type="ChEBI" id="CHEBI:57623"/>
    </ligand>
</feature>
<feature type="binding site" evidence="1">
    <location>
        <position position="228"/>
    </location>
    <ligand>
        <name>isopentenyl diphosphate</name>
        <dbReference type="ChEBI" id="CHEBI:128769"/>
    </ligand>
</feature>
<feature type="binding site" evidence="1">
    <location>
        <position position="271"/>
    </location>
    <ligand>
        <name>(2E)-4-hydroxy-3-methylbut-2-enyl diphosphate</name>
        <dbReference type="ChEBI" id="CHEBI:128753"/>
    </ligand>
</feature>
<feature type="binding site" evidence="1">
    <location>
        <position position="271"/>
    </location>
    <ligand>
        <name>dimethylallyl diphosphate</name>
        <dbReference type="ChEBI" id="CHEBI:57623"/>
    </ligand>
</feature>
<feature type="binding site" evidence="1">
    <location>
        <position position="271"/>
    </location>
    <ligand>
        <name>isopentenyl diphosphate</name>
        <dbReference type="ChEBI" id="CHEBI:128769"/>
    </ligand>
</feature>
<dbReference type="EC" id="1.17.7.4" evidence="1"/>
<dbReference type="EMBL" id="CP000001">
    <property type="protein sequence ID" value="AAU16231.1"/>
    <property type="molecule type" value="Genomic_DNA"/>
</dbReference>
<dbReference type="RefSeq" id="WP_000706669.1">
    <property type="nucleotide sequence ID" value="NZ_CP009968.1"/>
</dbReference>
<dbReference type="SMR" id="Q634Q0"/>
<dbReference type="KEGG" id="bcz:BCE33L4038"/>
<dbReference type="PATRIC" id="fig|288681.22.peg.1354"/>
<dbReference type="UniPathway" id="UPA00056">
    <property type="reaction ID" value="UER00097"/>
</dbReference>
<dbReference type="UniPathway" id="UPA00059">
    <property type="reaction ID" value="UER00105"/>
</dbReference>
<dbReference type="Proteomes" id="UP000002612">
    <property type="component" value="Chromosome"/>
</dbReference>
<dbReference type="GO" id="GO:0051539">
    <property type="term" value="F:4 iron, 4 sulfur cluster binding"/>
    <property type="evidence" value="ECO:0007669"/>
    <property type="project" value="UniProtKB-UniRule"/>
</dbReference>
<dbReference type="GO" id="GO:0051745">
    <property type="term" value="F:4-hydroxy-3-methylbut-2-enyl diphosphate reductase activity"/>
    <property type="evidence" value="ECO:0007669"/>
    <property type="project" value="UniProtKB-UniRule"/>
</dbReference>
<dbReference type="GO" id="GO:0046872">
    <property type="term" value="F:metal ion binding"/>
    <property type="evidence" value="ECO:0007669"/>
    <property type="project" value="UniProtKB-KW"/>
</dbReference>
<dbReference type="GO" id="GO:0050992">
    <property type="term" value="P:dimethylallyl diphosphate biosynthetic process"/>
    <property type="evidence" value="ECO:0007669"/>
    <property type="project" value="UniProtKB-UniRule"/>
</dbReference>
<dbReference type="GO" id="GO:0019288">
    <property type="term" value="P:isopentenyl diphosphate biosynthetic process, methylerythritol 4-phosphate pathway"/>
    <property type="evidence" value="ECO:0007669"/>
    <property type="project" value="UniProtKB-UniRule"/>
</dbReference>
<dbReference type="GO" id="GO:0016114">
    <property type="term" value="P:terpenoid biosynthetic process"/>
    <property type="evidence" value="ECO:0007669"/>
    <property type="project" value="UniProtKB-UniRule"/>
</dbReference>
<dbReference type="CDD" id="cd13944">
    <property type="entry name" value="lytB_ispH"/>
    <property type="match status" value="1"/>
</dbReference>
<dbReference type="Gene3D" id="3.40.50.11270">
    <property type="match status" value="1"/>
</dbReference>
<dbReference type="Gene3D" id="3.40.1010.20">
    <property type="entry name" value="4-hydroxy-3-methylbut-2-enyl diphosphate reductase, catalytic domain"/>
    <property type="match status" value="2"/>
</dbReference>
<dbReference type="HAMAP" id="MF_00191">
    <property type="entry name" value="IspH"/>
    <property type="match status" value="1"/>
</dbReference>
<dbReference type="InterPro" id="IPR003451">
    <property type="entry name" value="LytB/IspH"/>
</dbReference>
<dbReference type="NCBIfam" id="TIGR00216">
    <property type="entry name" value="ispH_lytB"/>
    <property type="match status" value="1"/>
</dbReference>
<dbReference type="NCBIfam" id="NF002187">
    <property type="entry name" value="PRK01045.1-1"/>
    <property type="match status" value="1"/>
</dbReference>
<dbReference type="PANTHER" id="PTHR30426">
    <property type="entry name" value="4-HYDROXY-3-METHYLBUT-2-ENYL DIPHOSPHATE REDUCTASE"/>
    <property type="match status" value="1"/>
</dbReference>
<dbReference type="PANTHER" id="PTHR30426:SF0">
    <property type="entry name" value="4-HYDROXY-3-METHYLBUT-2-ENYL DIPHOSPHATE REDUCTASE"/>
    <property type="match status" value="1"/>
</dbReference>
<dbReference type="Pfam" id="PF02401">
    <property type="entry name" value="LYTB"/>
    <property type="match status" value="1"/>
</dbReference>
<reference key="1">
    <citation type="journal article" date="2006" name="J. Bacteriol.">
        <title>Pathogenomic sequence analysis of Bacillus cereus and Bacillus thuringiensis isolates closely related to Bacillus anthracis.</title>
        <authorList>
            <person name="Han C.S."/>
            <person name="Xie G."/>
            <person name="Challacombe J.F."/>
            <person name="Altherr M.R."/>
            <person name="Bhotika S.S."/>
            <person name="Bruce D."/>
            <person name="Campbell C.S."/>
            <person name="Campbell M.L."/>
            <person name="Chen J."/>
            <person name="Chertkov O."/>
            <person name="Cleland C."/>
            <person name="Dimitrijevic M."/>
            <person name="Doggett N.A."/>
            <person name="Fawcett J.J."/>
            <person name="Glavina T."/>
            <person name="Goodwin L.A."/>
            <person name="Hill K.K."/>
            <person name="Hitchcock P."/>
            <person name="Jackson P.J."/>
            <person name="Keim P."/>
            <person name="Kewalramani A.R."/>
            <person name="Longmire J."/>
            <person name="Lucas S."/>
            <person name="Malfatti S."/>
            <person name="McMurry K."/>
            <person name="Meincke L.J."/>
            <person name="Misra M."/>
            <person name="Moseman B.L."/>
            <person name="Mundt M."/>
            <person name="Munk A.C."/>
            <person name="Okinaka R.T."/>
            <person name="Parson-Quintana B."/>
            <person name="Reilly L.P."/>
            <person name="Richardson P."/>
            <person name="Robinson D.L."/>
            <person name="Rubin E."/>
            <person name="Saunders E."/>
            <person name="Tapia R."/>
            <person name="Tesmer J.G."/>
            <person name="Thayer N."/>
            <person name="Thompson L.S."/>
            <person name="Tice H."/>
            <person name="Ticknor L.O."/>
            <person name="Wills P.L."/>
            <person name="Brettin T.S."/>
            <person name="Gilna P."/>
        </authorList>
    </citation>
    <scope>NUCLEOTIDE SEQUENCE [LARGE SCALE GENOMIC DNA]</scope>
    <source>
        <strain>ZK / E33L</strain>
    </source>
</reference>
<organism>
    <name type="scientific">Bacillus cereus (strain ZK / E33L)</name>
    <dbReference type="NCBI Taxonomy" id="288681"/>
    <lineage>
        <taxon>Bacteria</taxon>
        <taxon>Bacillati</taxon>
        <taxon>Bacillota</taxon>
        <taxon>Bacilli</taxon>
        <taxon>Bacillales</taxon>
        <taxon>Bacillaceae</taxon>
        <taxon>Bacillus</taxon>
        <taxon>Bacillus cereus group</taxon>
    </lineage>
</organism>
<evidence type="ECO:0000255" key="1">
    <source>
        <dbReference type="HAMAP-Rule" id="MF_00191"/>
    </source>
</evidence>
<proteinExistence type="inferred from homology"/>
<sequence>MKIVKISPRGYCYGVVDAMVIARNAALDTSLPRPIYILGMIVHNKHVTDAFEEDGIITLDGPSRLDILDKIDSGTVIFTAHGVSPEVKQRAKEKGLTTIDATCPDVTKTHDLIEAKKAEGYHVIYIGKKNHPEPEGAVGIAPDIVHLIERADDLKTLEIPTDKILVTNQTTMSQWDVQHLMEDIQKKFPTAEFHKEICLATQVRQEAVAKQADVADLTIVVGDPKSNNSNRLAQVSQEIAGTKAYRVADVSEIKLEWLQGVENVAVTAGASTPTPITKEVIAFLEQYDPMNPATWERVRKVPLQKILPRVKVKKEQ</sequence>
<comment type="function">
    <text evidence="1">Catalyzes the conversion of 1-hydroxy-2-methyl-2-(E)-butenyl 4-diphosphate (HMBPP) into a mixture of isopentenyl diphosphate (IPP) and dimethylallyl diphosphate (DMAPP). Acts in the terminal step of the DOXP/MEP pathway for isoprenoid precursor biosynthesis.</text>
</comment>
<comment type="catalytic activity">
    <reaction evidence="1">
        <text>isopentenyl diphosphate + 2 oxidized [2Fe-2S]-[ferredoxin] + H2O = (2E)-4-hydroxy-3-methylbut-2-enyl diphosphate + 2 reduced [2Fe-2S]-[ferredoxin] + 2 H(+)</text>
        <dbReference type="Rhea" id="RHEA:24488"/>
        <dbReference type="Rhea" id="RHEA-COMP:10000"/>
        <dbReference type="Rhea" id="RHEA-COMP:10001"/>
        <dbReference type="ChEBI" id="CHEBI:15377"/>
        <dbReference type="ChEBI" id="CHEBI:15378"/>
        <dbReference type="ChEBI" id="CHEBI:33737"/>
        <dbReference type="ChEBI" id="CHEBI:33738"/>
        <dbReference type="ChEBI" id="CHEBI:128753"/>
        <dbReference type="ChEBI" id="CHEBI:128769"/>
        <dbReference type="EC" id="1.17.7.4"/>
    </reaction>
</comment>
<comment type="catalytic activity">
    <reaction evidence="1">
        <text>dimethylallyl diphosphate + 2 oxidized [2Fe-2S]-[ferredoxin] + H2O = (2E)-4-hydroxy-3-methylbut-2-enyl diphosphate + 2 reduced [2Fe-2S]-[ferredoxin] + 2 H(+)</text>
        <dbReference type="Rhea" id="RHEA:24825"/>
        <dbReference type="Rhea" id="RHEA-COMP:10000"/>
        <dbReference type="Rhea" id="RHEA-COMP:10001"/>
        <dbReference type="ChEBI" id="CHEBI:15377"/>
        <dbReference type="ChEBI" id="CHEBI:15378"/>
        <dbReference type="ChEBI" id="CHEBI:33737"/>
        <dbReference type="ChEBI" id="CHEBI:33738"/>
        <dbReference type="ChEBI" id="CHEBI:57623"/>
        <dbReference type="ChEBI" id="CHEBI:128753"/>
        <dbReference type="EC" id="1.17.7.4"/>
    </reaction>
</comment>
<comment type="cofactor">
    <cofactor evidence="1">
        <name>[4Fe-4S] cluster</name>
        <dbReference type="ChEBI" id="CHEBI:49883"/>
    </cofactor>
    <text evidence="1">Binds 1 [4Fe-4S] cluster per subunit.</text>
</comment>
<comment type="pathway">
    <text evidence="1">Isoprenoid biosynthesis; dimethylallyl diphosphate biosynthesis; dimethylallyl diphosphate from (2E)-4-hydroxy-3-methylbutenyl diphosphate: step 1/1.</text>
</comment>
<comment type="pathway">
    <text evidence="1">Isoprenoid biosynthesis; isopentenyl diphosphate biosynthesis via DXP pathway; isopentenyl diphosphate from 1-deoxy-D-xylulose 5-phosphate: step 6/6.</text>
</comment>
<comment type="similarity">
    <text evidence="1">Belongs to the IspH family.</text>
</comment>
<accession>Q634Q0</accession>
<name>ISPH_BACCZ</name>
<keyword id="KW-0004">4Fe-4S</keyword>
<keyword id="KW-0408">Iron</keyword>
<keyword id="KW-0411">Iron-sulfur</keyword>
<keyword id="KW-0414">Isoprene biosynthesis</keyword>
<keyword id="KW-0479">Metal-binding</keyword>
<keyword id="KW-0560">Oxidoreductase</keyword>
<protein>
    <recommendedName>
        <fullName evidence="1">4-hydroxy-3-methylbut-2-enyl diphosphate reductase</fullName>
        <shortName evidence="1">HMBPP reductase</shortName>
        <ecNumber evidence="1">1.17.7.4</ecNumber>
    </recommendedName>
</protein>